<protein>
    <recommendedName>
        <fullName evidence="1">Elongation factor P</fullName>
        <shortName evidence="1">EF-P</shortName>
    </recommendedName>
</protein>
<organism>
    <name type="scientific">Histophilus somni (strain 129Pt)</name>
    <name type="common">Haemophilus somnus</name>
    <dbReference type="NCBI Taxonomy" id="205914"/>
    <lineage>
        <taxon>Bacteria</taxon>
        <taxon>Pseudomonadati</taxon>
        <taxon>Pseudomonadota</taxon>
        <taxon>Gammaproteobacteria</taxon>
        <taxon>Pasteurellales</taxon>
        <taxon>Pasteurellaceae</taxon>
        <taxon>Histophilus</taxon>
    </lineage>
</organism>
<accession>Q0I4U4</accession>
<name>EFP_HISS1</name>
<feature type="chain" id="PRO_1000010757" description="Elongation factor P">
    <location>
        <begin position="1"/>
        <end position="188"/>
    </location>
</feature>
<feature type="modified residue" description="N6-(3,6-diaminohexanoyl)-5-hydroxylysine" evidence="1">
    <location>
        <position position="34"/>
    </location>
</feature>
<evidence type="ECO:0000255" key="1">
    <source>
        <dbReference type="HAMAP-Rule" id="MF_00141"/>
    </source>
</evidence>
<gene>
    <name evidence="1" type="primary">efp</name>
    <name type="ordered locus">HS_1289</name>
</gene>
<dbReference type="EMBL" id="CP000436">
    <property type="protein sequence ID" value="ABI25564.1"/>
    <property type="molecule type" value="Genomic_DNA"/>
</dbReference>
<dbReference type="SMR" id="Q0I4U4"/>
<dbReference type="KEGG" id="hso:HS_1289"/>
<dbReference type="eggNOG" id="COG0231">
    <property type="taxonomic scope" value="Bacteria"/>
</dbReference>
<dbReference type="HOGENOM" id="CLU_074944_0_0_6"/>
<dbReference type="UniPathway" id="UPA00345"/>
<dbReference type="GO" id="GO:0005737">
    <property type="term" value="C:cytoplasm"/>
    <property type="evidence" value="ECO:0007669"/>
    <property type="project" value="UniProtKB-SubCell"/>
</dbReference>
<dbReference type="GO" id="GO:0003746">
    <property type="term" value="F:translation elongation factor activity"/>
    <property type="evidence" value="ECO:0007669"/>
    <property type="project" value="UniProtKB-UniRule"/>
</dbReference>
<dbReference type="GO" id="GO:0043043">
    <property type="term" value="P:peptide biosynthetic process"/>
    <property type="evidence" value="ECO:0007669"/>
    <property type="project" value="InterPro"/>
</dbReference>
<dbReference type="CDD" id="cd04470">
    <property type="entry name" value="S1_EF-P_repeat_1"/>
    <property type="match status" value="1"/>
</dbReference>
<dbReference type="CDD" id="cd05794">
    <property type="entry name" value="S1_EF-P_repeat_2"/>
    <property type="match status" value="1"/>
</dbReference>
<dbReference type="FunFam" id="2.30.30.30:FF:000003">
    <property type="entry name" value="Elongation factor P"/>
    <property type="match status" value="1"/>
</dbReference>
<dbReference type="FunFam" id="2.40.50.140:FF:000004">
    <property type="entry name" value="Elongation factor P"/>
    <property type="match status" value="1"/>
</dbReference>
<dbReference type="FunFam" id="2.40.50.140:FF:000009">
    <property type="entry name" value="Elongation factor P"/>
    <property type="match status" value="1"/>
</dbReference>
<dbReference type="Gene3D" id="2.30.30.30">
    <property type="match status" value="1"/>
</dbReference>
<dbReference type="Gene3D" id="2.40.50.140">
    <property type="entry name" value="Nucleic acid-binding proteins"/>
    <property type="match status" value="2"/>
</dbReference>
<dbReference type="HAMAP" id="MF_00141">
    <property type="entry name" value="EF_P"/>
    <property type="match status" value="1"/>
</dbReference>
<dbReference type="InterPro" id="IPR015365">
    <property type="entry name" value="Elong-fact-P_C"/>
</dbReference>
<dbReference type="InterPro" id="IPR012340">
    <property type="entry name" value="NA-bd_OB-fold"/>
</dbReference>
<dbReference type="InterPro" id="IPR014722">
    <property type="entry name" value="Rib_uL2_dom2"/>
</dbReference>
<dbReference type="InterPro" id="IPR020599">
    <property type="entry name" value="Transl_elong_fac_P/YeiP"/>
</dbReference>
<dbReference type="InterPro" id="IPR013185">
    <property type="entry name" value="Transl_elong_KOW-like"/>
</dbReference>
<dbReference type="InterPro" id="IPR001059">
    <property type="entry name" value="Transl_elong_P/YeiP_cen"/>
</dbReference>
<dbReference type="InterPro" id="IPR013852">
    <property type="entry name" value="Transl_elong_P/YeiP_CS"/>
</dbReference>
<dbReference type="InterPro" id="IPR011768">
    <property type="entry name" value="Transl_elongation_fac_P"/>
</dbReference>
<dbReference type="InterPro" id="IPR008991">
    <property type="entry name" value="Translation_prot_SH3-like_sf"/>
</dbReference>
<dbReference type="NCBIfam" id="TIGR00038">
    <property type="entry name" value="efp"/>
    <property type="match status" value="1"/>
</dbReference>
<dbReference type="NCBIfam" id="NF001810">
    <property type="entry name" value="PRK00529.1"/>
    <property type="match status" value="1"/>
</dbReference>
<dbReference type="PANTHER" id="PTHR30053">
    <property type="entry name" value="ELONGATION FACTOR P"/>
    <property type="match status" value="1"/>
</dbReference>
<dbReference type="PANTHER" id="PTHR30053:SF12">
    <property type="entry name" value="ELONGATION FACTOR P (EF-P) FAMILY PROTEIN"/>
    <property type="match status" value="1"/>
</dbReference>
<dbReference type="Pfam" id="PF01132">
    <property type="entry name" value="EFP"/>
    <property type="match status" value="1"/>
</dbReference>
<dbReference type="Pfam" id="PF08207">
    <property type="entry name" value="EFP_N"/>
    <property type="match status" value="1"/>
</dbReference>
<dbReference type="Pfam" id="PF09285">
    <property type="entry name" value="Elong-fact-P_C"/>
    <property type="match status" value="1"/>
</dbReference>
<dbReference type="PIRSF" id="PIRSF005901">
    <property type="entry name" value="EF-P"/>
    <property type="match status" value="1"/>
</dbReference>
<dbReference type="SMART" id="SM01185">
    <property type="entry name" value="EFP"/>
    <property type="match status" value="1"/>
</dbReference>
<dbReference type="SMART" id="SM00841">
    <property type="entry name" value="Elong-fact-P_C"/>
    <property type="match status" value="1"/>
</dbReference>
<dbReference type="SUPFAM" id="SSF50249">
    <property type="entry name" value="Nucleic acid-binding proteins"/>
    <property type="match status" value="2"/>
</dbReference>
<dbReference type="SUPFAM" id="SSF50104">
    <property type="entry name" value="Translation proteins SH3-like domain"/>
    <property type="match status" value="1"/>
</dbReference>
<dbReference type="PROSITE" id="PS01275">
    <property type="entry name" value="EFP"/>
    <property type="match status" value="1"/>
</dbReference>
<sequence length="188" mass="20626">MATYTTSDFKPGLKFMQDGEPCVIIENEFVKPGKGQAFTRTRIRKLISGKVLDVNFKSGTSVEAADVMDLNLTYSYKDEAFWYFMHPETFEQYSADAKAVGDAEKWLLDQADCIVTLWNGAPITITPPNFVELEVVETDPGLKGDTAGTGGKPATLSTGAVVKVPLFVQIGEVIKVDTRSGEYVSRVK</sequence>
<comment type="function">
    <text evidence="1">Involved in peptide bond synthesis. Alleviates ribosome stalling that occurs when 3 or more consecutive Pro residues or the sequence PPG is present in a protein, possibly by augmenting the peptidyl transferase activity of the ribosome. Modification of Lys-34 is required for alleviation.</text>
</comment>
<comment type="pathway">
    <text evidence="1">Protein biosynthesis; polypeptide chain elongation.</text>
</comment>
<comment type="subcellular location">
    <subcellularLocation>
        <location evidence="1">Cytoplasm</location>
    </subcellularLocation>
</comment>
<comment type="PTM">
    <text evidence="1">May be beta-lysylated on the epsilon-amino group of Lys-34 by the combined action of EpmA and EpmB, and then hydroxylated on the C5 position of the same residue by EpmC (if this protein is present). Lysylation is critical for the stimulatory effect of EF-P on peptide-bond formation. The lysylation moiety may extend toward the peptidyltransferase center and stabilize the terminal 3-CCA end of the tRNA. Hydroxylation of the C5 position on Lys-34 may allow additional potential stabilizing hydrogen-bond interactions with the P-tRNA.</text>
</comment>
<comment type="similarity">
    <text evidence="1">Belongs to the elongation factor P family.</text>
</comment>
<keyword id="KW-0963">Cytoplasm</keyword>
<keyword id="KW-0251">Elongation factor</keyword>
<keyword id="KW-0379">Hydroxylation</keyword>
<keyword id="KW-0648">Protein biosynthesis</keyword>
<proteinExistence type="inferred from homology"/>
<reference key="1">
    <citation type="journal article" date="2007" name="J. Bacteriol.">
        <title>Complete genome sequence of Haemophilus somnus (Histophilus somni) strain 129Pt and comparison to Haemophilus ducreyi 35000HP and Haemophilus influenzae Rd.</title>
        <authorList>
            <person name="Challacombe J.F."/>
            <person name="Duncan A.J."/>
            <person name="Brettin T.S."/>
            <person name="Bruce D."/>
            <person name="Chertkov O."/>
            <person name="Detter J.C."/>
            <person name="Han C.S."/>
            <person name="Misra M."/>
            <person name="Richardson P."/>
            <person name="Tapia R."/>
            <person name="Thayer N."/>
            <person name="Xie G."/>
            <person name="Inzana T.J."/>
        </authorList>
    </citation>
    <scope>NUCLEOTIDE SEQUENCE [LARGE SCALE GENOMIC DNA]</scope>
    <source>
        <strain>129Pt</strain>
    </source>
</reference>